<evidence type="ECO:0000255" key="1"/>
<evidence type="ECO:0000255" key="2">
    <source>
        <dbReference type="PROSITE-ProRule" id="PRU00303"/>
    </source>
</evidence>
<evidence type="ECO:0000269" key="3">
    <source>
    </source>
</evidence>
<evidence type="ECO:0000303" key="4">
    <source>
    </source>
</evidence>
<evidence type="ECO:0000305" key="5"/>
<evidence type="ECO:0000312" key="6">
    <source>
        <dbReference type="EMBL" id="AAL22549.1"/>
    </source>
</evidence>
<evidence type="ECO:0007744" key="7">
    <source>
        <dbReference type="PDB" id="4C47"/>
    </source>
</evidence>
<evidence type="ECO:0007829" key="8">
    <source>
        <dbReference type="PDB" id="4C47"/>
    </source>
</evidence>
<name>SADB_SALTY</name>
<protein>
    <recommendedName>
        <fullName evidence="5">Inner membrane lipoprotein SadB</fullName>
    </recommendedName>
</protein>
<keyword id="KW-0002">3D-structure</keyword>
<keyword id="KW-0997">Cell inner membrane</keyword>
<keyword id="KW-1003">Cell membrane</keyword>
<keyword id="KW-0175">Coiled coil</keyword>
<keyword id="KW-0449">Lipoprotein</keyword>
<keyword id="KW-0472">Membrane</keyword>
<keyword id="KW-0564">Palmitate</keyword>
<keyword id="KW-1185">Reference proteome</keyword>
<keyword id="KW-0732">Signal</keyword>
<accession>Q8ZL65</accession>
<reference key="1">
    <citation type="journal article" date="2001" name="Nature">
        <title>Complete genome sequence of Salmonella enterica serovar Typhimurium LT2.</title>
        <authorList>
            <person name="McClelland M."/>
            <person name="Sanderson K.E."/>
            <person name="Spieth J."/>
            <person name="Clifton S.W."/>
            <person name="Latreille P."/>
            <person name="Courtney L."/>
            <person name="Porwollik S."/>
            <person name="Ali J."/>
            <person name="Dante M."/>
            <person name="Du F."/>
            <person name="Hou S."/>
            <person name="Layman D."/>
            <person name="Leonard S."/>
            <person name="Nguyen C."/>
            <person name="Scott K."/>
            <person name="Holmes A."/>
            <person name="Grewal N."/>
            <person name="Mulvaney E."/>
            <person name="Ryan E."/>
            <person name="Sun H."/>
            <person name="Florea L."/>
            <person name="Miller W."/>
            <person name="Stoneking T."/>
            <person name="Nhan M."/>
            <person name="Waterston R."/>
            <person name="Wilson R.K."/>
        </authorList>
    </citation>
    <scope>NUCLEOTIDE SEQUENCE [LARGE SCALE GENOMIC DNA]</scope>
    <source>
        <strain>LT2 / SGSC1412 / ATCC 700720</strain>
    </source>
</reference>
<reference evidence="7" key="2">
    <citation type="journal article" date="2014" name="J. Biol. Chem.">
        <title>A trimeric lipoprotein assists in trimeric autotransporter biogenesis in enterobacteria.</title>
        <authorList>
            <person name="Grin I."/>
            <person name="Hartmann M.D."/>
            <person name="Sauer G."/>
            <person name="Hernandez Alvarez B."/>
            <person name="Schuetz M."/>
            <person name="Wagner S."/>
            <person name="Madlung J."/>
            <person name="Macek B."/>
            <person name="Felipe-Lopez A."/>
            <person name="Hensel M."/>
            <person name="Lupas A."/>
            <person name="Linke D."/>
        </authorList>
    </citation>
    <scope>X-RAY CRYSTALLOGRAPHY (2.45 ANGSTROMS) OF 23-227</scope>
    <scope>FUNCTION</scope>
    <scope>SUBUNIT</scope>
    <scope>SUBCELLULAR LOCATION</scope>
    <scope>DOMAIN</scope>
</reference>
<feature type="signal peptide" evidence="2">
    <location>
        <begin position="1"/>
        <end position="21"/>
    </location>
</feature>
<feature type="chain" id="PRO_0000437737" description="Inner membrane lipoprotein SadB">
    <location>
        <begin position="22"/>
        <end position="227"/>
    </location>
</feature>
<feature type="coiled-coil region" evidence="1">
    <location>
        <begin position="31"/>
        <end position="68"/>
    </location>
</feature>
<feature type="lipid moiety-binding region" description="N-palmitoyl cysteine" evidence="2">
    <location>
        <position position="22"/>
    </location>
</feature>
<feature type="lipid moiety-binding region" description="S-diacylglycerol cysteine" evidence="2">
    <location>
        <position position="22"/>
    </location>
</feature>
<feature type="helix" evidence="8">
    <location>
        <begin position="28"/>
        <end position="91"/>
    </location>
</feature>
<feature type="strand" evidence="8">
    <location>
        <begin position="93"/>
        <end position="95"/>
    </location>
</feature>
<feature type="strand" evidence="8">
    <location>
        <begin position="101"/>
        <end position="106"/>
    </location>
</feature>
<feature type="strand" evidence="8">
    <location>
        <begin position="111"/>
        <end position="122"/>
    </location>
</feature>
<feature type="strand" evidence="8">
    <location>
        <begin position="125"/>
        <end position="134"/>
    </location>
</feature>
<feature type="strand" evidence="8">
    <location>
        <begin position="136"/>
        <end position="138"/>
    </location>
</feature>
<feature type="strand" evidence="8">
    <location>
        <begin position="140"/>
        <end position="142"/>
    </location>
</feature>
<feature type="strand" evidence="8">
    <location>
        <begin position="144"/>
        <end position="151"/>
    </location>
</feature>
<feature type="helix" evidence="8">
    <location>
        <begin position="157"/>
        <end position="159"/>
    </location>
</feature>
<feature type="helix" evidence="8">
    <location>
        <begin position="160"/>
        <end position="166"/>
    </location>
</feature>
<feature type="strand" evidence="8">
    <location>
        <begin position="168"/>
        <end position="173"/>
    </location>
</feature>
<feature type="strand" evidence="8">
    <location>
        <begin position="184"/>
        <end position="191"/>
    </location>
</feature>
<feature type="turn" evidence="8">
    <location>
        <begin position="195"/>
        <end position="197"/>
    </location>
</feature>
<feature type="strand" evidence="8">
    <location>
        <begin position="200"/>
        <end position="206"/>
    </location>
</feature>
<comment type="function">
    <text evidence="3">Required for proper surface expression of the autotransporter adhesin SadA. Could be directly involved in the biogenesis of functionally active SadA.</text>
</comment>
<comment type="subunit">
    <text evidence="3">Homotrimer.</text>
</comment>
<comment type="subcellular location">
    <subcellularLocation>
        <location evidence="3">Cell inner membrane</location>
        <topology evidence="2 3">Lipid-anchor</topology>
    </subcellularLocation>
</comment>
<comment type="domain">
    <text evidence="3">The homotrimer is held together by an extended N-terminal coiled coil, which leads into three separate globular C-terminal domains of beta-sandwich topology.</text>
</comment>
<sequence length="227" mass="25906">MHKNGKFIPLLALGFTFFLSGCDYFADKHLVEEMKEQQKEQETKINLLEKQQKEQEAKINLLEKQQATIINTTKKVTEVVGRVERKQRLFDYTELDPSQTHYFIINNGNIGLAGRILSIEPIDNGSVIHLDLVNLLSIPVSNLAFNMTWGTKKPSEAKDLPRWKQLLLNTKMDSTIELLPGAWTNVTLTLKGVSPNNLKYLKIGIDMENVIFDSIQPINDTKKKPKK</sequence>
<organism>
    <name type="scientific">Salmonella typhimurium (strain LT2 / SGSC1412 / ATCC 700720)</name>
    <dbReference type="NCBI Taxonomy" id="99287"/>
    <lineage>
        <taxon>Bacteria</taxon>
        <taxon>Pseudomonadati</taxon>
        <taxon>Pseudomonadota</taxon>
        <taxon>Gammaproteobacteria</taxon>
        <taxon>Enterobacterales</taxon>
        <taxon>Enterobacteriaceae</taxon>
        <taxon>Salmonella</taxon>
    </lineage>
</organism>
<dbReference type="EMBL" id="AE006468">
    <property type="protein sequence ID" value="AAL22549.1"/>
    <property type="molecule type" value="Genomic_DNA"/>
</dbReference>
<dbReference type="RefSeq" id="NP_462590.1">
    <property type="nucleotide sequence ID" value="NC_003197.2"/>
</dbReference>
<dbReference type="RefSeq" id="WP_000549457.1">
    <property type="nucleotide sequence ID" value="NC_003197.2"/>
</dbReference>
<dbReference type="PDB" id="4C47">
    <property type="method" value="X-ray"/>
    <property type="resolution" value="2.45 A"/>
    <property type="chains" value="A/B/C=23-227"/>
</dbReference>
<dbReference type="PDBsum" id="4C47"/>
<dbReference type="SMR" id="Q8ZL65"/>
<dbReference type="STRING" id="99287.STM3690"/>
<dbReference type="PaxDb" id="99287-STM3690"/>
<dbReference type="GeneID" id="1255214"/>
<dbReference type="KEGG" id="stm:STM3690"/>
<dbReference type="PATRIC" id="fig|99287.12.peg.3903"/>
<dbReference type="HOGENOM" id="CLU_112391_0_0_6"/>
<dbReference type="OMA" id="HATWGNE"/>
<dbReference type="BioCyc" id="SENT99287:STM3690-MONOMER"/>
<dbReference type="EvolutionaryTrace" id="Q8ZL65"/>
<dbReference type="Proteomes" id="UP000001014">
    <property type="component" value="Chromosome"/>
</dbReference>
<dbReference type="GO" id="GO:0005886">
    <property type="term" value="C:plasma membrane"/>
    <property type="evidence" value="ECO:0007669"/>
    <property type="project" value="UniProtKB-SubCell"/>
</dbReference>
<dbReference type="Gene3D" id="2.60.40.1620">
    <property type="entry name" value="Lipoprotein YajI-like"/>
    <property type="match status" value="1"/>
</dbReference>
<dbReference type="InterPro" id="IPR037125">
    <property type="entry name" value="YajI-like_sf"/>
</dbReference>
<dbReference type="PROSITE" id="PS51257">
    <property type="entry name" value="PROKAR_LIPOPROTEIN"/>
    <property type="match status" value="1"/>
</dbReference>
<proteinExistence type="evidence at protein level"/>
<gene>
    <name evidence="4" type="primary">sadB</name>
    <name evidence="6" type="ordered locus">STM3690</name>
</gene>